<gene>
    <name evidence="1" type="primary">rplS</name>
    <name type="ordered locus">CTLon_0278</name>
</gene>
<protein>
    <recommendedName>
        <fullName evidence="1">Large ribosomal subunit protein bL19</fullName>
    </recommendedName>
    <alternativeName>
        <fullName evidence="2">50S ribosomal protein L19</fullName>
    </alternativeName>
</protein>
<feature type="chain" id="PRO_1000193805" description="Large ribosomal subunit protein bL19">
    <location>
        <begin position="1"/>
        <end position="121"/>
    </location>
</feature>
<organism>
    <name type="scientific">Chlamydia trachomatis serovar L2b (strain UCH-1/proctitis)</name>
    <dbReference type="NCBI Taxonomy" id="471473"/>
    <lineage>
        <taxon>Bacteria</taxon>
        <taxon>Pseudomonadati</taxon>
        <taxon>Chlamydiota</taxon>
        <taxon>Chlamydiia</taxon>
        <taxon>Chlamydiales</taxon>
        <taxon>Chlamydiaceae</taxon>
        <taxon>Chlamydia/Chlamydophila group</taxon>
        <taxon>Chlamydia</taxon>
    </lineage>
</organism>
<accession>B0BB14</accession>
<comment type="function">
    <text evidence="1">This protein is located at the 30S-50S ribosomal subunit interface and may play a role in the structure and function of the aminoacyl-tRNA binding site.</text>
</comment>
<comment type="similarity">
    <text evidence="1">Belongs to the bacterial ribosomal protein bL19 family.</text>
</comment>
<reference key="1">
    <citation type="journal article" date="2008" name="Genome Res.">
        <title>Chlamydia trachomatis: genome sequence analysis of lymphogranuloma venereum isolates.</title>
        <authorList>
            <person name="Thomson N.R."/>
            <person name="Holden M.T.G."/>
            <person name="Carder C."/>
            <person name="Lennard N."/>
            <person name="Lockey S.J."/>
            <person name="Marsh P."/>
            <person name="Skipp P."/>
            <person name="O'Connor C.D."/>
            <person name="Goodhead I."/>
            <person name="Norbertzcak H."/>
            <person name="Harris B."/>
            <person name="Ormond D."/>
            <person name="Rance R."/>
            <person name="Quail M.A."/>
            <person name="Parkhill J."/>
            <person name="Stephens R.S."/>
            <person name="Clarke I.N."/>
        </authorList>
    </citation>
    <scope>NUCLEOTIDE SEQUENCE [LARGE SCALE GENOMIC DNA]</scope>
    <source>
        <strain>UCH-1/proctitis</strain>
    </source>
</reference>
<keyword id="KW-0687">Ribonucleoprotein</keyword>
<keyword id="KW-0689">Ribosomal protein</keyword>
<evidence type="ECO:0000255" key="1">
    <source>
        <dbReference type="HAMAP-Rule" id="MF_00402"/>
    </source>
</evidence>
<evidence type="ECO:0000305" key="2"/>
<sequence length="121" mass="13142">MGNLIKELQDEQCRTDLADFCVGDTIRVATNISEGGKERVQVFQGTVMARKGGGAGETVSLHRVAYGEGMEKSFLLNSPKIVSIEVVKRGKVSRARLFYLRGKTGKAAKVKELIGSRAAKK</sequence>
<proteinExistence type="inferred from homology"/>
<name>RL19_CHLTB</name>
<dbReference type="EMBL" id="AM884177">
    <property type="protein sequence ID" value="CAP06676.1"/>
    <property type="molecule type" value="Genomic_DNA"/>
</dbReference>
<dbReference type="RefSeq" id="WP_009871375.1">
    <property type="nucleotide sequence ID" value="NC_010280.2"/>
</dbReference>
<dbReference type="SMR" id="B0BB14"/>
<dbReference type="KEGG" id="ctl:CTLon_0278"/>
<dbReference type="HOGENOM" id="CLU_103507_2_1_0"/>
<dbReference type="Proteomes" id="UP001154401">
    <property type="component" value="Chromosome"/>
</dbReference>
<dbReference type="GO" id="GO:0022625">
    <property type="term" value="C:cytosolic large ribosomal subunit"/>
    <property type="evidence" value="ECO:0007669"/>
    <property type="project" value="TreeGrafter"/>
</dbReference>
<dbReference type="GO" id="GO:0003735">
    <property type="term" value="F:structural constituent of ribosome"/>
    <property type="evidence" value="ECO:0007669"/>
    <property type="project" value="InterPro"/>
</dbReference>
<dbReference type="GO" id="GO:0006412">
    <property type="term" value="P:translation"/>
    <property type="evidence" value="ECO:0007669"/>
    <property type="project" value="UniProtKB-UniRule"/>
</dbReference>
<dbReference type="FunFam" id="2.30.30.790:FF:000013">
    <property type="entry name" value="50S ribosomal protein L19"/>
    <property type="match status" value="1"/>
</dbReference>
<dbReference type="Gene3D" id="2.30.30.790">
    <property type="match status" value="1"/>
</dbReference>
<dbReference type="HAMAP" id="MF_00402">
    <property type="entry name" value="Ribosomal_bL19"/>
    <property type="match status" value="1"/>
</dbReference>
<dbReference type="InterPro" id="IPR001857">
    <property type="entry name" value="Ribosomal_bL19"/>
</dbReference>
<dbReference type="InterPro" id="IPR018257">
    <property type="entry name" value="Ribosomal_bL19_CS"/>
</dbReference>
<dbReference type="InterPro" id="IPR038657">
    <property type="entry name" value="Ribosomal_bL19_sf"/>
</dbReference>
<dbReference type="InterPro" id="IPR008991">
    <property type="entry name" value="Translation_prot_SH3-like_sf"/>
</dbReference>
<dbReference type="NCBIfam" id="TIGR01024">
    <property type="entry name" value="rplS_bact"/>
    <property type="match status" value="1"/>
</dbReference>
<dbReference type="PANTHER" id="PTHR15680:SF9">
    <property type="entry name" value="LARGE RIBOSOMAL SUBUNIT PROTEIN BL19M"/>
    <property type="match status" value="1"/>
</dbReference>
<dbReference type="PANTHER" id="PTHR15680">
    <property type="entry name" value="RIBOSOMAL PROTEIN L19"/>
    <property type="match status" value="1"/>
</dbReference>
<dbReference type="Pfam" id="PF01245">
    <property type="entry name" value="Ribosomal_L19"/>
    <property type="match status" value="1"/>
</dbReference>
<dbReference type="PIRSF" id="PIRSF002191">
    <property type="entry name" value="Ribosomal_L19"/>
    <property type="match status" value="1"/>
</dbReference>
<dbReference type="PRINTS" id="PR00061">
    <property type="entry name" value="RIBOSOMALL19"/>
</dbReference>
<dbReference type="SUPFAM" id="SSF50104">
    <property type="entry name" value="Translation proteins SH3-like domain"/>
    <property type="match status" value="1"/>
</dbReference>
<dbReference type="PROSITE" id="PS01015">
    <property type="entry name" value="RIBOSOMAL_L19"/>
    <property type="match status" value="1"/>
</dbReference>